<feature type="chain" id="PRO_1000145368" description="Peptide methionine sulfoxide reductase MsrB">
    <location>
        <begin position="1"/>
        <end position="137"/>
    </location>
</feature>
<feature type="domain" description="MsrB" evidence="2">
    <location>
        <begin position="7"/>
        <end position="129"/>
    </location>
</feature>
<feature type="active site" description="Nucleophile" evidence="2">
    <location>
        <position position="118"/>
    </location>
</feature>
<feature type="binding site" evidence="2">
    <location>
        <position position="46"/>
    </location>
    <ligand>
        <name>Zn(2+)</name>
        <dbReference type="ChEBI" id="CHEBI:29105"/>
    </ligand>
</feature>
<feature type="binding site" evidence="2">
    <location>
        <position position="49"/>
    </location>
    <ligand>
        <name>Zn(2+)</name>
        <dbReference type="ChEBI" id="CHEBI:29105"/>
    </ligand>
</feature>
<feature type="binding site" evidence="2">
    <location>
        <position position="95"/>
    </location>
    <ligand>
        <name>Zn(2+)</name>
        <dbReference type="ChEBI" id="CHEBI:29105"/>
    </ligand>
</feature>
<feature type="binding site" evidence="2">
    <location>
        <position position="98"/>
    </location>
    <ligand>
        <name>Zn(2+)</name>
        <dbReference type="ChEBI" id="CHEBI:29105"/>
    </ligand>
</feature>
<reference key="1">
    <citation type="journal article" date="2008" name="J. Bacteriol.">
        <title>The complete genome sequence of Escherichia coli DH10B: insights into the biology of a laboratory workhorse.</title>
        <authorList>
            <person name="Durfee T."/>
            <person name="Nelson R."/>
            <person name="Baldwin S."/>
            <person name="Plunkett G. III"/>
            <person name="Burland V."/>
            <person name="Mau B."/>
            <person name="Petrosino J.F."/>
            <person name="Qin X."/>
            <person name="Muzny D.M."/>
            <person name="Ayele M."/>
            <person name="Gibbs R.A."/>
            <person name="Csorgo B."/>
            <person name="Posfai G."/>
            <person name="Weinstock G.M."/>
            <person name="Blattner F.R."/>
        </authorList>
    </citation>
    <scope>NUCLEOTIDE SEQUENCE [LARGE SCALE GENOMIC DNA]</scope>
    <source>
        <strain>K12 / DH10B</strain>
    </source>
</reference>
<gene>
    <name evidence="1" type="primary">msrB</name>
    <name type="ordered locus">ECDH10B_1916</name>
</gene>
<protein>
    <recommendedName>
        <fullName evidence="1">Peptide methionine sulfoxide reductase MsrB</fullName>
        <ecNumber evidence="1">1.8.4.12</ecNumber>
    </recommendedName>
    <alternativeName>
        <fullName evidence="1">Peptide-methionine (R)-S-oxide reductase</fullName>
    </alternativeName>
</protein>
<evidence type="ECO:0000255" key="1">
    <source>
        <dbReference type="HAMAP-Rule" id="MF_01400"/>
    </source>
</evidence>
<evidence type="ECO:0000255" key="2">
    <source>
        <dbReference type="PROSITE-ProRule" id="PRU01126"/>
    </source>
</evidence>
<keyword id="KW-0479">Metal-binding</keyword>
<keyword id="KW-0560">Oxidoreductase</keyword>
<keyword id="KW-0862">Zinc</keyword>
<comment type="catalytic activity">
    <reaction evidence="1">
        <text>L-methionyl-[protein] + [thioredoxin]-disulfide + H2O = L-methionyl-(R)-S-oxide-[protein] + [thioredoxin]-dithiol</text>
        <dbReference type="Rhea" id="RHEA:24164"/>
        <dbReference type="Rhea" id="RHEA-COMP:10698"/>
        <dbReference type="Rhea" id="RHEA-COMP:10700"/>
        <dbReference type="Rhea" id="RHEA-COMP:12313"/>
        <dbReference type="Rhea" id="RHEA-COMP:12314"/>
        <dbReference type="ChEBI" id="CHEBI:15377"/>
        <dbReference type="ChEBI" id="CHEBI:16044"/>
        <dbReference type="ChEBI" id="CHEBI:29950"/>
        <dbReference type="ChEBI" id="CHEBI:45764"/>
        <dbReference type="ChEBI" id="CHEBI:50058"/>
        <dbReference type="EC" id="1.8.4.12"/>
    </reaction>
</comment>
<comment type="cofactor">
    <cofactor evidence="1">
        <name>Zn(2+)</name>
        <dbReference type="ChEBI" id="CHEBI:29105"/>
    </cofactor>
    <text evidence="1">Binds 1 zinc ion per subunit. The zinc ion is important for the structural integrity of the protein.</text>
</comment>
<comment type="similarity">
    <text evidence="1">Belongs to the MsrB Met sulfoxide reductase family.</text>
</comment>
<accession>B1XGN8</accession>
<sequence>MANKPSAEELKKNLSEMQFYVTQNHGTEPPFTGRLLHNKRDGVYHCLICDAPLFHSQTKYDSGCGWPSFYEPVSEESIRYIKDLSHGMQRIEIRCGNCDAHLGHVFPDGPQPTGERYCVNSASLRFTDGENGEEING</sequence>
<proteinExistence type="inferred from homology"/>
<organism>
    <name type="scientific">Escherichia coli (strain K12 / DH10B)</name>
    <dbReference type="NCBI Taxonomy" id="316385"/>
    <lineage>
        <taxon>Bacteria</taxon>
        <taxon>Pseudomonadati</taxon>
        <taxon>Pseudomonadota</taxon>
        <taxon>Gammaproteobacteria</taxon>
        <taxon>Enterobacterales</taxon>
        <taxon>Enterobacteriaceae</taxon>
        <taxon>Escherichia</taxon>
    </lineage>
</organism>
<dbReference type="EC" id="1.8.4.12" evidence="1"/>
<dbReference type="EMBL" id="CP000948">
    <property type="protein sequence ID" value="ACB02976.1"/>
    <property type="molecule type" value="Genomic_DNA"/>
</dbReference>
<dbReference type="RefSeq" id="WP_001284618.1">
    <property type="nucleotide sequence ID" value="NC_010473.1"/>
</dbReference>
<dbReference type="SMR" id="B1XGN8"/>
<dbReference type="GeneID" id="93775987"/>
<dbReference type="KEGG" id="ecd:ECDH10B_1916"/>
<dbReference type="HOGENOM" id="CLU_031040_8_5_6"/>
<dbReference type="GO" id="GO:0005737">
    <property type="term" value="C:cytoplasm"/>
    <property type="evidence" value="ECO:0007669"/>
    <property type="project" value="TreeGrafter"/>
</dbReference>
<dbReference type="GO" id="GO:0033743">
    <property type="term" value="F:peptide-methionine (R)-S-oxide reductase activity"/>
    <property type="evidence" value="ECO:0007669"/>
    <property type="project" value="UniProtKB-UniRule"/>
</dbReference>
<dbReference type="GO" id="GO:0008270">
    <property type="term" value="F:zinc ion binding"/>
    <property type="evidence" value="ECO:0007669"/>
    <property type="project" value="UniProtKB-UniRule"/>
</dbReference>
<dbReference type="GO" id="GO:0030091">
    <property type="term" value="P:protein repair"/>
    <property type="evidence" value="ECO:0007669"/>
    <property type="project" value="InterPro"/>
</dbReference>
<dbReference type="GO" id="GO:0006979">
    <property type="term" value="P:response to oxidative stress"/>
    <property type="evidence" value="ECO:0007669"/>
    <property type="project" value="InterPro"/>
</dbReference>
<dbReference type="FunFam" id="2.170.150.20:FF:000001">
    <property type="entry name" value="Peptide methionine sulfoxide reductase MsrB"/>
    <property type="match status" value="1"/>
</dbReference>
<dbReference type="Gene3D" id="2.170.150.20">
    <property type="entry name" value="Peptide methionine sulfoxide reductase"/>
    <property type="match status" value="1"/>
</dbReference>
<dbReference type="HAMAP" id="MF_01400">
    <property type="entry name" value="MsrB"/>
    <property type="match status" value="1"/>
</dbReference>
<dbReference type="InterPro" id="IPR028427">
    <property type="entry name" value="Met_Sox_Rdtase_MsrB"/>
</dbReference>
<dbReference type="InterPro" id="IPR002579">
    <property type="entry name" value="Met_Sox_Rdtase_MsrB_dom"/>
</dbReference>
<dbReference type="InterPro" id="IPR011057">
    <property type="entry name" value="Mss4-like_sf"/>
</dbReference>
<dbReference type="NCBIfam" id="TIGR00357">
    <property type="entry name" value="peptide-methionine (R)-S-oxide reductase MsrB"/>
    <property type="match status" value="1"/>
</dbReference>
<dbReference type="PANTHER" id="PTHR10173">
    <property type="entry name" value="METHIONINE SULFOXIDE REDUCTASE"/>
    <property type="match status" value="1"/>
</dbReference>
<dbReference type="PANTHER" id="PTHR10173:SF52">
    <property type="entry name" value="METHIONINE-R-SULFOXIDE REDUCTASE B1"/>
    <property type="match status" value="1"/>
</dbReference>
<dbReference type="Pfam" id="PF01641">
    <property type="entry name" value="SelR"/>
    <property type="match status" value="1"/>
</dbReference>
<dbReference type="SUPFAM" id="SSF51316">
    <property type="entry name" value="Mss4-like"/>
    <property type="match status" value="1"/>
</dbReference>
<dbReference type="PROSITE" id="PS51790">
    <property type="entry name" value="MSRB"/>
    <property type="match status" value="1"/>
</dbReference>
<name>MSRB_ECODH</name>